<evidence type="ECO:0000255" key="1">
    <source>
        <dbReference type="HAMAP-Rule" id="MF_00511"/>
    </source>
</evidence>
<evidence type="ECO:0000305" key="2"/>
<name>RS17E_SACI4</name>
<proteinExistence type="inferred from homology"/>
<protein>
    <recommendedName>
        <fullName evidence="1">Small ribosomal subunit protein eS17</fullName>
    </recommendedName>
    <alternativeName>
        <fullName evidence="2">30S ribosomal protein S17e</fullName>
    </alternativeName>
</protein>
<reference key="1">
    <citation type="journal article" date="2009" name="Proc. Natl. Acad. Sci. U.S.A.">
        <title>Biogeography of the Sulfolobus islandicus pan-genome.</title>
        <authorList>
            <person name="Reno M.L."/>
            <person name="Held N.L."/>
            <person name="Fields C.J."/>
            <person name="Burke P.V."/>
            <person name="Whitaker R.J."/>
        </authorList>
    </citation>
    <scope>NUCLEOTIDE SEQUENCE [LARGE SCALE GENOMIC DNA]</scope>
    <source>
        <strain>M.14.25 / Kamchatka #1</strain>
    </source>
</reference>
<dbReference type="EMBL" id="CP001400">
    <property type="protein sequence ID" value="ACP38590.1"/>
    <property type="molecule type" value="Genomic_DNA"/>
</dbReference>
<dbReference type="RefSeq" id="WP_012711820.1">
    <property type="nucleotide sequence ID" value="NC_012588.1"/>
</dbReference>
<dbReference type="SMR" id="C3MY33"/>
<dbReference type="KEGG" id="sia:M1425_1846"/>
<dbReference type="HOGENOM" id="CLU_176720_0_0_2"/>
<dbReference type="Proteomes" id="UP000001350">
    <property type="component" value="Chromosome"/>
</dbReference>
<dbReference type="GO" id="GO:0005829">
    <property type="term" value="C:cytosol"/>
    <property type="evidence" value="ECO:0007669"/>
    <property type="project" value="UniProtKB-ARBA"/>
</dbReference>
<dbReference type="GO" id="GO:1990904">
    <property type="term" value="C:ribonucleoprotein complex"/>
    <property type="evidence" value="ECO:0007669"/>
    <property type="project" value="UniProtKB-KW"/>
</dbReference>
<dbReference type="GO" id="GO:0005840">
    <property type="term" value="C:ribosome"/>
    <property type="evidence" value="ECO:0007669"/>
    <property type="project" value="UniProtKB-KW"/>
</dbReference>
<dbReference type="GO" id="GO:0003735">
    <property type="term" value="F:structural constituent of ribosome"/>
    <property type="evidence" value="ECO:0007669"/>
    <property type="project" value="InterPro"/>
</dbReference>
<dbReference type="GO" id="GO:0006412">
    <property type="term" value="P:translation"/>
    <property type="evidence" value="ECO:0007669"/>
    <property type="project" value="UniProtKB-UniRule"/>
</dbReference>
<dbReference type="Gene3D" id="1.10.60.20">
    <property type="entry name" value="Ribosomal protein S17e-like"/>
    <property type="match status" value="1"/>
</dbReference>
<dbReference type="HAMAP" id="MF_00511">
    <property type="entry name" value="Ribosomal_eS17"/>
    <property type="match status" value="1"/>
</dbReference>
<dbReference type="InterPro" id="IPR001210">
    <property type="entry name" value="Ribosomal_eS17"/>
</dbReference>
<dbReference type="InterPro" id="IPR018273">
    <property type="entry name" value="Ribosomal_eS17_CS"/>
</dbReference>
<dbReference type="InterPro" id="IPR036401">
    <property type="entry name" value="Ribosomal_eS17_sf"/>
</dbReference>
<dbReference type="NCBIfam" id="NF002242">
    <property type="entry name" value="PRK01151.1"/>
    <property type="match status" value="1"/>
</dbReference>
<dbReference type="PANTHER" id="PTHR10732">
    <property type="entry name" value="40S RIBOSOMAL PROTEIN S17"/>
    <property type="match status" value="1"/>
</dbReference>
<dbReference type="PANTHER" id="PTHR10732:SF0">
    <property type="entry name" value="40S RIBOSOMAL PROTEIN S17"/>
    <property type="match status" value="1"/>
</dbReference>
<dbReference type="Pfam" id="PF00833">
    <property type="entry name" value="Ribosomal_S17e"/>
    <property type="match status" value="1"/>
</dbReference>
<dbReference type="SUPFAM" id="SSF116820">
    <property type="entry name" value="Rps17e-like"/>
    <property type="match status" value="1"/>
</dbReference>
<dbReference type="PROSITE" id="PS00712">
    <property type="entry name" value="RIBOSOMAL_S17E"/>
    <property type="match status" value="1"/>
</dbReference>
<sequence length="79" mass="9615">MGNIYTKDIKRIVKEIYNQYKDEIKDDYNTNKQIVVRYVDVKSKKVRNRIAGYLTRYYKIMKEKETSPTEEKEEISEEI</sequence>
<feature type="chain" id="PRO_1000206617" description="Small ribosomal subunit protein eS17">
    <location>
        <begin position="1"/>
        <end position="79"/>
    </location>
</feature>
<comment type="similarity">
    <text evidence="1">Belongs to the eukaryotic ribosomal protein eS17 family.</text>
</comment>
<keyword id="KW-0687">Ribonucleoprotein</keyword>
<keyword id="KW-0689">Ribosomal protein</keyword>
<organism>
    <name type="scientific">Saccharolobus islandicus (strain M.14.25 / Kamchatka #1)</name>
    <name type="common">Sulfolobus islandicus</name>
    <dbReference type="NCBI Taxonomy" id="427317"/>
    <lineage>
        <taxon>Archaea</taxon>
        <taxon>Thermoproteota</taxon>
        <taxon>Thermoprotei</taxon>
        <taxon>Sulfolobales</taxon>
        <taxon>Sulfolobaceae</taxon>
        <taxon>Saccharolobus</taxon>
    </lineage>
</organism>
<accession>C3MY33</accession>
<gene>
    <name evidence="1" type="primary">rps17e</name>
    <name type="ordered locus">M1425_1846</name>
</gene>